<protein>
    <recommendedName>
        <fullName evidence="1">Protein-L-isoaspartate O-methyltransferase</fullName>
        <ecNumber evidence="1">2.1.1.77</ecNumber>
    </recommendedName>
    <alternativeName>
        <fullName evidence="1">L-isoaspartyl protein carboxyl methyltransferase</fullName>
    </alternativeName>
    <alternativeName>
        <fullName evidence="1">Protein L-isoaspartyl methyltransferase</fullName>
    </alternativeName>
    <alternativeName>
        <fullName evidence="1">Protein-beta-aspartate methyltransferase</fullName>
        <shortName evidence="1">PIMT</shortName>
    </alternativeName>
</protein>
<evidence type="ECO:0000255" key="1">
    <source>
        <dbReference type="HAMAP-Rule" id="MF_00090"/>
    </source>
</evidence>
<evidence type="ECO:0000305" key="2"/>
<reference key="1">
    <citation type="submission" date="2007-06" db="EMBL/GenBank/DDBJ databases">
        <authorList>
            <person name="Dodson R.J."/>
            <person name="Harkins D."/>
            <person name="Paulsen I.T."/>
        </authorList>
    </citation>
    <scope>NUCLEOTIDE SEQUENCE [LARGE SCALE GENOMIC DNA]</scope>
    <source>
        <strain>DSM 24068 / PA7</strain>
    </source>
</reference>
<comment type="function">
    <text evidence="1">Catalyzes the methyl esterification of L-isoaspartyl residues in peptides and proteins that result from spontaneous decomposition of normal L-aspartyl and L-asparaginyl residues. It plays a role in the repair and/or degradation of damaged proteins.</text>
</comment>
<comment type="catalytic activity">
    <reaction evidence="1">
        <text>[protein]-L-isoaspartate + S-adenosyl-L-methionine = [protein]-L-isoaspartate alpha-methyl ester + S-adenosyl-L-homocysteine</text>
        <dbReference type="Rhea" id="RHEA:12705"/>
        <dbReference type="Rhea" id="RHEA-COMP:12143"/>
        <dbReference type="Rhea" id="RHEA-COMP:12144"/>
        <dbReference type="ChEBI" id="CHEBI:57856"/>
        <dbReference type="ChEBI" id="CHEBI:59789"/>
        <dbReference type="ChEBI" id="CHEBI:90596"/>
        <dbReference type="ChEBI" id="CHEBI:90598"/>
        <dbReference type="EC" id="2.1.1.77"/>
    </reaction>
</comment>
<comment type="subcellular location">
    <subcellularLocation>
        <location evidence="1">Cytoplasm</location>
    </subcellularLocation>
</comment>
<comment type="similarity">
    <text evidence="1">Belongs to the methyltransferase superfamily. L-isoaspartyl/D-aspartyl protein methyltransferase family.</text>
</comment>
<comment type="sequence caution" evidence="2">
    <conflict type="erroneous initiation">
        <sequence resource="EMBL-CDS" id="ABR86690"/>
    </conflict>
</comment>
<name>PIMT_PSEP7</name>
<dbReference type="EC" id="2.1.1.77" evidence="1"/>
<dbReference type="EMBL" id="CP000744">
    <property type="protein sequence ID" value="ABR86690.1"/>
    <property type="status" value="ALT_INIT"/>
    <property type="molecule type" value="Genomic_DNA"/>
</dbReference>
<dbReference type="RefSeq" id="WP_074197311.1">
    <property type="nucleotide sequence ID" value="NC_009656.1"/>
</dbReference>
<dbReference type="SMR" id="A6V1G4"/>
<dbReference type="GeneID" id="77219895"/>
<dbReference type="KEGG" id="pap:PSPA7_1515"/>
<dbReference type="HOGENOM" id="CLU_055432_2_0_6"/>
<dbReference type="Proteomes" id="UP000001582">
    <property type="component" value="Chromosome"/>
</dbReference>
<dbReference type="GO" id="GO:0005737">
    <property type="term" value="C:cytoplasm"/>
    <property type="evidence" value="ECO:0007669"/>
    <property type="project" value="UniProtKB-SubCell"/>
</dbReference>
<dbReference type="GO" id="GO:0004719">
    <property type="term" value="F:protein-L-isoaspartate (D-aspartate) O-methyltransferase activity"/>
    <property type="evidence" value="ECO:0007669"/>
    <property type="project" value="UniProtKB-UniRule"/>
</dbReference>
<dbReference type="GO" id="GO:0032259">
    <property type="term" value="P:methylation"/>
    <property type="evidence" value="ECO:0007669"/>
    <property type="project" value="UniProtKB-KW"/>
</dbReference>
<dbReference type="GO" id="GO:0036211">
    <property type="term" value="P:protein modification process"/>
    <property type="evidence" value="ECO:0007669"/>
    <property type="project" value="UniProtKB-UniRule"/>
</dbReference>
<dbReference type="GO" id="GO:0030091">
    <property type="term" value="P:protein repair"/>
    <property type="evidence" value="ECO:0007669"/>
    <property type="project" value="UniProtKB-UniRule"/>
</dbReference>
<dbReference type="CDD" id="cd02440">
    <property type="entry name" value="AdoMet_MTases"/>
    <property type="match status" value="1"/>
</dbReference>
<dbReference type="FunFam" id="3.40.50.150:FF:000010">
    <property type="entry name" value="Protein-L-isoaspartate O-methyltransferase"/>
    <property type="match status" value="1"/>
</dbReference>
<dbReference type="Gene3D" id="3.40.50.150">
    <property type="entry name" value="Vaccinia Virus protein VP39"/>
    <property type="match status" value="1"/>
</dbReference>
<dbReference type="HAMAP" id="MF_00090">
    <property type="entry name" value="PIMT"/>
    <property type="match status" value="1"/>
</dbReference>
<dbReference type="InterPro" id="IPR000682">
    <property type="entry name" value="PCMT"/>
</dbReference>
<dbReference type="InterPro" id="IPR029063">
    <property type="entry name" value="SAM-dependent_MTases_sf"/>
</dbReference>
<dbReference type="NCBIfam" id="TIGR00080">
    <property type="entry name" value="pimt"/>
    <property type="match status" value="1"/>
</dbReference>
<dbReference type="NCBIfam" id="NF001453">
    <property type="entry name" value="PRK00312.1"/>
    <property type="match status" value="1"/>
</dbReference>
<dbReference type="PANTHER" id="PTHR11579">
    <property type="entry name" value="PROTEIN-L-ISOASPARTATE O-METHYLTRANSFERASE"/>
    <property type="match status" value="1"/>
</dbReference>
<dbReference type="PANTHER" id="PTHR11579:SF0">
    <property type="entry name" value="PROTEIN-L-ISOASPARTATE(D-ASPARTATE) O-METHYLTRANSFERASE"/>
    <property type="match status" value="1"/>
</dbReference>
<dbReference type="Pfam" id="PF01135">
    <property type="entry name" value="PCMT"/>
    <property type="match status" value="1"/>
</dbReference>
<dbReference type="SUPFAM" id="SSF53335">
    <property type="entry name" value="S-adenosyl-L-methionine-dependent methyltransferases"/>
    <property type="match status" value="1"/>
</dbReference>
<dbReference type="PROSITE" id="PS01279">
    <property type="entry name" value="PCMT"/>
    <property type="match status" value="1"/>
</dbReference>
<organism>
    <name type="scientific">Pseudomonas paraeruginosa (strain DSM 24068 / PA7)</name>
    <name type="common">Pseudomonas aeruginosa (strain PA7)</name>
    <dbReference type="NCBI Taxonomy" id="381754"/>
    <lineage>
        <taxon>Bacteria</taxon>
        <taxon>Pseudomonadati</taxon>
        <taxon>Pseudomonadota</taxon>
        <taxon>Gammaproteobacteria</taxon>
        <taxon>Pseudomonadales</taxon>
        <taxon>Pseudomonadaceae</taxon>
        <taxon>Pseudomonas</taxon>
        <taxon>Pseudomonas paraeruginosa</taxon>
    </lineage>
</organism>
<feature type="chain" id="PRO_0000351905" description="Protein-L-isoaspartate O-methyltransferase">
    <location>
        <begin position="1"/>
        <end position="211"/>
    </location>
</feature>
<feature type="active site" evidence="1">
    <location>
        <position position="60"/>
    </location>
</feature>
<accession>A6V1G4</accession>
<gene>
    <name evidence="1" type="primary">pcm</name>
    <name type="ordered locus">PSPA7_1515</name>
</gene>
<sequence length="211" mass="23396">MTSQRTRERLIQRLYEEGLSNARVLEVIRRTPRHLFVDEALAHRAYEDTALPIGHNQTISQPFMVARMTELLLAAGPLDKVMEIGTGSGYQTAVLAQLVERVFSVERIQALQDKAKERLAELNLRNVVFRWGDGWEGWSALAPYNGIIVTAAASEVPQSLLDQLAPGGRLVIPVGGGEVQQLMLIVRTEDGFSRQVLDSVRFVPLLNGPIA</sequence>
<proteinExistence type="inferred from homology"/>
<keyword id="KW-0963">Cytoplasm</keyword>
<keyword id="KW-0489">Methyltransferase</keyword>
<keyword id="KW-0949">S-adenosyl-L-methionine</keyword>
<keyword id="KW-0808">Transferase</keyword>